<gene>
    <name evidence="1" type="primary">fabH</name>
    <name type="ordered locus">CBUD_1583</name>
</gene>
<comment type="function">
    <text evidence="1">Catalyzes the condensation reaction of fatty acid synthesis by the addition to an acyl acceptor of two carbons from malonyl-ACP. Catalyzes the first condensation reaction which initiates fatty acid synthesis and may therefore play a role in governing the total rate of fatty acid production. Possesses both acetoacetyl-ACP synthase and acetyl transacylase activities. Its substrate specificity determines the biosynthesis of branched-chain and/or straight-chain of fatty acids.</text>
</comment>
<comment type="catalytic activity">
    <reaction evidence="1">
        <text>malonyl-[ACP] + acetyl-CoA + H(+) = 3-oxobutanoyl-[ACP] + CO2 + CoA</text>
        <dbReference type="Rhea" id="RHEA:12080"/>
        <dbReference type="Rhea" id="RHEA-COMP:9623"/>
        <dbReference type="Rhea" id="RHEA-COMP:9625"/>
        <dbReference type="ChEBI" id="CHEBI:15378"/>
        <dbReference type="ChEBI" id="CHEBI:16526"/>
        <dbReference type="ChEBI" id="CHEBI:57287"/>
        <dbReference type="ChEBI" id="CHEBI:57288"/>
        <dbReference type="ChEBI" id="CHEBI:78449"/>
        <dbReference type="ChEBI" id="CHEBI:78450"/>
        <dbReference type="EC" id="2.3.1.180"/>
    </reaction>
</comment>
<comment type="pathway">
    <text evidence="1">Lipid metabolism; fatty acid biosynthesis.</text>
</comment>
<comment type="subunit">
    <text evidence="1">Homodimer.</text>
</comment>
<comment type="subcellular location">
    <subcellularLocation>
        <location evidence="1">Cytoplasm</location>
    </subcellularLocation>
</comment>
<comment type="domain">
    <text evidence="1">The last Arg residue of the ACP-binding site is essential for the weak association between ACP/AcpP and FabH.</text>
</comment>
<comment type="similarity">
    <text evidence="1">Belongs to the thiolase-like superfamily. FabH family.</text>
</comment>
<reference key="1">
    <citation type="journal article" date="2009" name="Infect. Immun.">
        <title>Comparative genomics reveal extensive transposon-mediated genomic plasticity and diversity among potential effector proteins within the genus Coxiella.</title>
        <authorList>
            <person name="Beare P.A."/>
            <person name="Unsworth N."/>
            <person name="Andoh M."/>
            <person name="Voth D.E."/>
            <person name="Omsland A."/>
            <person name="Gilk S.D."/>
            <person name="Williams K.P."/>
            <person name="Sobral B.W."/>
            <person name="Kupko J.J. III"/>
            <person name="Porcella S.F."/>
            <person name="Samuel J.E."/>
            <person name="Heinzen R.A."/>
        </authorList>
    </citation>
    <scope>NUCLEOTIDE SEQUENCE [LARGE SCALE GENOMIC DNA]</scope>
    <source>
        <strain>Dugway 5J108-111</strain>
    </source>
</reference>
<accession>A9KEA1</accession>
<feature type="chain" id="PRO_1000088308" description="Beta-ketoacyl-[acyl-carrier-protein] synthase III">
    <location>
        <begin position="1"/>
        <end position="319"/>
    </location>
</feature>
<feature type="region of interest" description="ACP-binding" evidence="1">
    <location>
        <begin position="247"/>
        <end position="251"/>
    </location>
</feature>
<feature type="active site" evidence="1">
    <location>
        <position position="115"/>
    </location>
</feature>
<feature type="active site" evidence="1">
    <location>
        <position position="246"/>
    </location>
</feature>
<feature type="active site" evidence="1">
    <location>
        <position position="276"/>
    </location>
</feature>
<organism>
    <name type="scientific">Coxiella burnetii (strain Dugway 5J108-111)</name>
    <dbReference type="NCBI Taxonomy" id="434922"/>
    <lineage>
        <taxon>Bacteria</taxon>
        <taxon>Pseudomonadati</taxon>
        <taxon>Pseudomonadota</taxon>
        <taxon>Gammaproteobacteria</taxon>
        <taxon>Legionellales</taxon>
        <taxon>Coxiellaceae</taxon>
        <taxon>Coxiella</taxon>
    </lineage>
</organism>
<sequence>MTYARIQGVGSYIPQQILSNADLEKMVNTTDEWIMQRVGVRERHVIANSPDNTTTMAVDAAKRAIEMAGIDPAVIDMIIVGTATAEYYFPSTACLVQKHLNLREDIPAFDINGACAGFVYALSIADQYIRNGGAKHILVIGVDSLTKVVDWKDRSTCILFGDGAGAVILQAHKEPGILNTILHANGDYSDLITAKSGVWERESVPHLHMYGKEVFKLAVTKLGEIVDEIIEKSGLKQSDIDWLIPHQANLRIIEATAKRLGLPRERVILTIEQHGNTSAASIPLALDAAVRAGKIKRGDTLLLEAFGAGLAWGAALLKL</sequence>
<evidence type="ECO:0000255" key="1">
    <source>
        <dbReference type="HAMAP-Rule" id="MF_01815"/>
    </source>
</evidence>
<name>FABH_COXBN</name>
<dbReference type="EC" id="2.3.1.180" evidence="1"/>
<dbReference type="EMBL" id="CP000733">
    <property type="protein sequence ID" value="ABS77808.1"/>
    <property type="molecule type" value="Genomic_DNA"/>
</dbReference>
<dbReference type="RefSeq" id="WP_011997167.1">
    <property type="nucleotide sequence ID" value="NC_009727.1"/>
</dbReference>
<dbReference type="SMR" id="A9KEA1"/>
<dbReference type="KEGG" id="cbd:CBUD_1583"/>
<dbReference type="HOGENOM" id="CLU_039592_4_1_6"/>
<dbReference type="UniPathway" id="UPA00094"/>
<dbReference type="Proteomes" id="UP000008555">
    <property type="component" value="Chromosome"/>
</dbReference>
<dbReference type="GO" id="GO:0005737">
    <property type="term" value="C:cytoplasm"/>
    <property type="evidence" value="ECO:0007669"/>
    <property type="project" value="UniProtKB-SubCell"/>
</dbReference>
<dbReference type="GO" id="GO:0004315">
    <property type="term" value="F:3-oxoacyl-[acyl-carrier-protein] synthase activity"/>
    <property type="evidence" value="ECO:0007669"/>
    <property type="project" value="InterPro"/>
</dbReference>
<dbReference type="GO" id="GO:0033818">
    <property type="term" value="F:beta-ketoacyl-acyl-carrier-protein synthase III activity"/>
    <property type="evidence" value="ECO:0007669"/>
    <property type="project" value="UniProtKB-UniRule"/>
</dbReference>
<dbReference type="GO" id="GO:0006633">
    <property type="term" value="P:fatty acid biosynthetic process"/>
    <property type="evidence" value="ECO:0007669"/>
    <property type="project" value="UniProtKB-UniRule"/>
</dbReference>
<dbReference type="CDD" id="cd00830">
    <property type="entry name" value="KAS_III"/>
    <property type="match status" value="1"/>
</dbReference>
<dbReference type="FunFam" id="3.40.47.10:FF:000004">
    <property type="entry name" value="3-oxoacyl-[acyl-carrier-protein] synthase 3"/>
    <property type="match status" value="1"/>
</dbReference>
<dbReference type="Gene3D" id="3.40.47.10">
    <property type="match status" value="1"/>
</dbReference>
<dbReference type="HAMAP" id="MF_01815">
    <property type="entry name" value="FabH"/>
    <property type="match status" value="1"/>
</dbReference>
<dbReference type="InterPro" id="IPR013747">
    <property type="entry name" value="ACP_syn_III_C"/>
</dbReference>
<dbReference type="InterPro" id="IPR013751">
    <property type="entry name" value="ACP_syn_III_N"/>
</dbReference>
<dbReference type="InterPro" id="IPR004655">
    <property type="entry name" value="FabH"/>
</dbReference>
<dbReference type="InterPro" id="IPR016039">
    <property type="entry name" value="Thiolase-like"/>
</dbReference>
<dbReference type="NCBIfam" id="TIGR00747">
    <property type="entry name" value="fabH"/>
    <property type="match status" value="1"/>
</dbReference>
<dbReference type="NCBIfam" id="NF006829">
    <property type="entry name" value="PRK09352.1"/>
    <property type="match status" value="1"/>
</dbReference>
<dbReference type="PANTHER" id="PTHR43091">
    <property type="entry name" value="3-OXOACYL-[ACYL-CARRIER-PROTEIN] SYNTHASE"/>
    <property type="match status" value="1"/>
</dbReference>
<dbReference type="PANTHER" id="PTHR43091:SF1">
    <property type="entry name" value="BETA-KETOACYL-[ACYL-CARRIER-PROTEIN] SYNTHASE III, CHLOROPLASTIC"/>
    <property type="match status" value="1"/>
</dbReference>
<dbReference type="Pfam" id="PF08545">
    <property type="entry name" value="ACP_syn_III"/>
    <property type="match status" value="1"/>
</dbReference>
<dbReference type="Pfam" id="PF08541">
    <property type="entry name" value="ACP_syn_III_C"/>
    <property type="match status" value="1"/>
</dbReference>
<dbReference type="SUPFAM" id="SSF53901">
    <property type="entry name" value="Thiolase-like"/>
    <property type="match status" value="1"/>
</dbReference>
<proteinExistence type="inferred from homology"/>
<keyword id="KW-0012">Acyltransferase</keyword>
<keyword id="KW-0963">Cytoplasm</keyword>
<keyword id="KW-0275">Fatty acid biosynthesis</keyword>
<keyword id="KW-0276">Fatty acid metabolism</keyword>
<keyword id="KW-0444">Lipid biosynthesis</keyword>
<keyword id="KW-0443">Lipid metabolism</keyword>
<keyword id="KW-0511">Multifunctional enzyme</keyword>
<keyword id="KW-0808">Transferase</keyword>
<protein>
    <recommendedName>
        <fullName evidence="1">Beta-ketoacyl-[acyl-carrier-protein] synthase III</fullName>
        <shortName evidence="1">Beta-ketoacyl-ACP synthase III</shortName>
        <shortName evidence="1">KAS III</shortName>
        <ecNumber evidence="1">2.3.1.180</ecNumber>
    </recommendedName>
    <alternativeName>
        <fullName evidence="1">3-oxoacyl-[acyl-carrier-protein] synthase 3</fullName>
    </alternativeName>
    <alternativeName>
        <fullName evidence="1">3-oxoacyl-[acyl-carrier-protein] synthase III</fullName>
    </alternativeName>
</protein>